<evidence type="ECO:0000255" key="1">
    <source>
        <dbReference type="HAMAP-Rule" id="MF_01302"/>
    </source>
</evidence>
<evidence type="ECO:0000305" key="2"/>
<organism>
    <name type="scientific">Streptococcus pyogenes serotype M28 (strain MGAS6180)</name>
    <dbReference type="NCBI Taxonomy" id="319701"/>
    <lineage>
        <taxon>Bacteria</taxon>
        <taxon>Bacillati</taxon>
        <taxon>Bacillota</taxon>
        <taxon>Bacilli</taxon>
        <taxon>Lactobacillales</taxon>
        <taxon>Streptococcaceae</taxon>
        <taxon>Streptococcus</taxon>
    </lineage>
</organism>
<reference key="1">
    <citation type="journal article" date="2005" name="J. Infect. Dis.">
        <title>Genome sequence of a serotype M28 strain of group A Streptococcus: potential new insights into puerperal sepsis and bacterial disease specificity.</title>
        <authorList>
            <person name="Green N.M."/>
            <person name="Zhang S."/>
            <person name="Porcella S.F."/>
            <person name="Nagiec M.J."/>
            <person name="Barbian K.D."/>
            <person name="Beres S.B."/>
            <person name="Lefebvre R.B."/>
            <person name="Musser J.M."/>
        </authorList>
    </citation>
    <scope>NUCLEOTIDE SEQUENCE [LARGE SCALE GENOMIC DNA]</scope>
    <source>
        <strain>MGAS6180</strain>
    </source>
</reference>
<proteinExistence type="inferred from homology"/>
<dbReference type="EMBL" id="CP000056">
    <property type="protein sequence ID" value="AAX71171.1"/>
    <property type="molecule type" value="Genomic_DNA"/>
</dbReference>
<dbReference type="RefSeq" id="WP_002987748.1">
    <property type="nucleotide sequence ID" value="NC_007296.2"/>
</dbReference>
<dbReference type="SMR" id="Q48VT5"/>
<dbReference type="GeneID" id="69900040"/>
<dbReference type="KEGG" id="spb:M28_Spy0057"/>
<dbReference type="HOGENOM" id="CLU_098428_0_2_9"/>
<dbReference type="GO" id="GO:1990904">
    <property type="term" value="C:ribonucleoprotein complex"/>
    <property type="evidence" value="ECO:0007669"/>
    <property type="project" value="UniProtKB-KW"/>
</dbReference>
<dbReference type="GO" id="GO:0005840">
    <property type="term" value="C:ribosome"/>
    <property type="evidence" value="ECO:0007669"/>
    <property type="project" value="UniProtKB-KW"/>
</dbReference>
<dbReference type="GO" id="GO:0019843">
    <property type="term" value="F:rRNA binding"/>
    <property type="evidence" value="ECO:0007669"/>
    <property type="project" value="UniProtKB-UniRule"/>
</dbReference>
<dbReference type="GO" id="GO:0003735">
    <property type="term" value="F:structural constituent of ribosome"/>
    <property type="evidence" value="ECO:0007669"/>
    <property type="project" value="InterPro"/>
</dbReference>
<dbReference type="GO" id="GO:0006412">
    <property type="term" value="P:translation"/>
    <property type="evidence" value="ECO:0007669"/>
    <property type="project" value="UniProtKB-UniRule"/>
</dbReference>
<dbReference type="FunFam" id="3.30.1370.30:FF:000002">
    <property type="entry name" value="30S ribosomal protein S8"/>
    <property type="match status" value="1"/>
</dbReference>
<dbReference type="FunFam" id="3.30.1490.10:FF:000001">
    <property type="entry name" value="30S ribosomal protein S8"/>
    <property type="match status" value="1"/>
</dbReference>
<dbReference type="Gene3D" id="3.30.1370.30">
    <property type="match status" value="1"/>
</dbReference>
<dbReference type="Gene3D" id="3.30.1490.10">
    <property type="match status" value="1"/>
</dbReference>
<dbReference type="HAMAP" id="MF_01302_B">
    <property type="entry name" value="Ribosomal_uS8_B"/>
    <property type="match status" value="1"/>
</dbReference>
<dbReference type="InterPro" id="IPR000630">
    <property type="entry name" value="Ribosomal_uS8"/>
</dbReference>
<dbReference type="InterPro" id="IPR047863">
    <property type="entry name" value="Ribosomal_uS8_CS"/>
</dbReference>
<dbReference type="InterPro" id="IPR035987">
    <property type="entry name" value="Ribosomal_uS8_sf"/>
</dbReference>
<dbReference type="NCBIfam" id="NF001109">
    <property type="entry name" value="PRK00136.1"/>
    <property type="match status" value="1"/>
</dbReference>
<dbReference type="PANTHER" id="PTHR11758">
    <property type="entry name" value="40S RIBOSOMAL PROTEIN S15A"/>
    <property type="match status" value="1"/>
</dbReference>
<dbReference type="Pfam" id="PF00410">
    <property type="entry name" value="Ribosomal_S8"/>
    <property type="match status" value="1"/>
</dbReference>
<dbReference type="SUPFAM" id="SSF56047">
    <property type="entry name" value="Ribosomal protein S8"/>
    <property type="match status" value="1"/>
</dbReference>
<dbReference type="PROSITE" id="PS00053">
    <property type="entry name" value="RIBOSOMAL_S8"/>
    <property type="match status" value="1"/>
</dbReference>
<comment type="function">
    <text evidence="1">One of the primary rRNA binding proteins, it binds directly to 16S rRNA central domain where it helps coordinate assembly of the platform of the 30S subunit.</text>
</comment>
<comment type="subunit">
    <text evidence="1">Part of the 30S ribosomal subunit. Contacts proteins S5 and S12.</text>
</comment>
<comment type="similarity">
    <text evidence="1">Belongs to the universal ribosomal protein uS8 family.</text>
</comment>
<keyword id="KW-0687">Ribonucleoprotein</keyword>
<keyword id="KW-0689">Ribosomal protein</keyword>
<keyword id="KW-0694">RNA-binding</keyword>
<keyword id="KW-0699">rRNA-binding</keyword>
<protein>
    <recommendedName>
        <fullName evidence="1">Small ribosomal subunit protein uS8</fullName>
    </recommendedName>
    <alternativeName>
        <fullName evidence="2">30S ribosomal protein S8</fullName>
    </alternativeName>
</protein>
<name>RS8_STRPM</name>
<feature type="chain" id="PRO_0000225897" description="Small ribosomal subunit protein uS8">
    <location>
        <begin position="1"/>
        <end position="132"/>
    </location>
</feature>
<sequence>MVMTDPIADFLTRIRNANQVKHEVLEVPASNIKKGIAEILKREGFVKNVEVIEDDKQGIIRVFLKYGKNGERVITNLKRISKPGLRVYAKRDDMPKVLNGLGIAIISTSEGLLTDKEARQKNVGGEVIAYVW</sequence>
<accession>Q48VT5</accession>
<gene>
    <name evidence="1" type="primary">rpsH</name>
    <name type="ordered locus">M28_Spy0057</name>
</gene>